<keyword id="KW-0880">Kelch repeat</keyword>
<keyword id="KW-0597">Phosphoprotein</keyword>
<keyword id="KW-1185">Reference proteome</keyword>
<keyword id="KW-0677">Repeat</keyword>
<protein>
    <recommendedName>
        <fullName>Kelch repeat and BTB domain-containing protein 11</fullName>
    </recommendedName>
</protein>
<evidence type="ECO:0000250" key="1">
    <source>
        <dbReference type="UniProtKB" id="O94819"/>
    </source>
</evidence>
<evidence type="ECO:0000255" key="2">
    <source>
        <dbReference type="PROSITE-ProRule" id="PRU00037"/>
    </source>
</evidence>
<evidence type="ECO:0000256" key="3">
    <source>
        <dbReference type="SAM" id="MobiDB-lite"/>
    </source>
</evidence>
<evidence type="ECO:0000305" key="4"/>
<evidence type="ECO:0007744" key="5">
    <source>
    </source>
</evidence>
<evidence type="ECO:0007744" key="6">
    <source>
    </source>
</evidence>
<dbReference type="EMBL" id="AK129197">
    <property type="protein sequence ID" value="BAC98007.1"/>
    <property type="status" value="ALT_INIT"/>
    <property type="molecule type" value="mRNA"/>
</dbReference>
<dbReference type="EMBL" id="AK080001">
    <property type="protein sequence ID" value="BAC37803.1"/>
    <property type="molecule type" value="mRNA"/>
</dbReference>
<dbReference type="EMBL" id="BC080858">
    <property type="protein sequence ID" value="AAH80858.1"/>
    <property type="molecule type" value="mRNA"/>
</dbReference>
<dbReference type="CCDS" id="CCDS52493.1"/>
<dbReference type="RefSeq" id="NP_083392.1">
    <property type="nucleotide sequence ID" value="NM_029116.2"/>
</dbReference>
<dbReference type="RefSeq" id="XP_006508978.1">
    <property type="nucleotide sequence ID" value="XM_006508915.3"/>
</dbReference>
<dbReference type="RefSeq" id="XP_006508979.1">
    <property type="nucleotide sequence ID" value="XM_006508916.4"/>
</dbReference>
<dbReference type="RefSeq" id="XP_036010237.1">
    <property type="nucleotide sequence ID" value="XM_036154344.1"/>
</dbReference>
<dbReference type="RefSeq" id="XP_036010238.1">
    <property type="nucleotide sequence ID" value="XM_036154345.1"/>
</dbReference>
<dbReference type="SMR" id="Q8BNW9"/>
<dbReference type="BioGRID" id="217065">
    <property type="interactions" value="4"/>
</dbReference>
<dbReference type="FunCoup" id="Q8BNW9">
    <property type="interactions" value="30"/>
</dbReference>
<dbReference type="IntAct" id="Q8BNW9">
    <property type="interactions" value="3"/>
</dbReference>
<dbReference type="MINT" id="Q8BNW9"/>
<dbReference type="STRING" id="10090.ENSMUSP00000068321"/>
<dbReference type="iPTMnet" id="Q8BNW9"/>
<dbReference type="PhosphoSitePlus" id="Q8BNW9"/>
<dbReference type="SwissPalm" id="Q8BNW9"/>
<dbReference type="jPOST" id="Q8BNW9"/>
<dbReference type="PaxDb" id="10090-ENSMUSP00000068321"/>
<dbReference type="PeptideAtlas" id="Q8BNW9"/>
<dbReference type="ProteomicsDB" id="269447"/>
<dbReference type="Antibodypedia" id="63434">
    <property type="antibodies" value="31 antibodies from 12 providers"/>
</dbReference>
<dbReference type="Ensembl" id="ENSMUST00000069399.7">
    <property type="protein sequence ID" value="ENSMUSP00000068321.6"/>
    <property type="gene ID" value="ENSMUSG00000055675.7"/>
</dbReference>
<dbReference type="Ensembl" id="ENSMUST00000183471.2">
    <property type="protein sequence ID" value="ENSMUSP00000139292.2"/>
    <property type="gene ID" value="ENSMUSG00000055675.7"/>
</dbReference>
<dbReference type="GeneID" id="74901"/>
<dbReference type="KEGG" id="mmu:74901"/>
<dbReference type="UCSC" id="uc009kzk.2">
    <property type="organism name" value="mouse"/>
</dbReference>
<dbReference type="AGR" id="MGI:1922151"/>
<dbReference type="CTD" id="9920"/>
<dbReference type="MGI" id="MGI:1922151">
    <property type="gene designation" value="Kbtbd11"/>
</dbReference>
<dbReference type="VEuPathDB" id="HostDB:ENSMUSG00000055675"/>
<dbReference type="eggNOG" id="KOG1072">
    <property type="taxonomic scope" value="Eukaryota"/>
</dbReference>
<dbReference type="GeneTree" id="ENSGT00940000161983"/>
<dbReference type="HOGENOM" id="CLU_020313_2_0_1"/>
<dbReference type="InParanoid" id="Q8BNW9"/>
<dbReference type="OMA" id="HAVAPCV"/>
<dbReference type="OrthoDB" id="45365at2759"/>
<dbReference type="PhylomeDB" id="Q8BNW9"/>
<dbReference type="TreeFam" id="TF328485"/>
<dbReference type="BioGRID-ORCS" id="74901">
    <property type="hits" value="2 hits in 76 CRISPR screens"/>
</dbReference>
<dbReference type="ChiTaRS" id="Kbtbd11">
    <property type="organism name" value="mouse"/>
</dbReference>
<dbReference type="PRO" id="PR:Q8BNW9"/>
<dbReference type="Proteomes" id="UP000000589">
    <property type="component" value="Chromosome 8"/>
</dbReference>
<dbReference type="RNAct" id="Q8BNW9">
    <property type="molecule type" value="protein"/>
</dbReference>
<dbReference type="Bgee" id="ENSMUSG00000055675">
    <property type="expression patterns" value="Expressed in floor plate of midbrain and 238 other cell types or tissues"/>
</dbReference>
<dbReference type="Gene3D" id="2.120.10.80">
    <property type="entry name" value="Kelch-type beta propeller"/>
    <property type="match status" value="1"/>
</dbReference>
<dbReference type="Gene3D" id="3.30.710.10">
    <property type="entry name" value="Potassium Channel Kv1.1, Chain A"/>
    <property type="match status" value="1"/>
</dbReference>
<dbReference type="InterPro" id="IPR000210">
    <property type="entry name" value="BTB/POZ_dom"/>
</dbReference>
<dbReference type="InterPro" id="IPR015915">
    <property type="entry name" value="Kelch-typ_b-propeller"/>
</dbReference>
<dbReference type="InterPro" id="IPR052310">
    <property type="entry name" value="Kelch/BTB_domain_protein"/>
</dbReference>
<dbReference type="InterPro" id="IPR006652">
    <property type="entry name" value="Kelch_1"/>
</dbReference>
<dbReference type="InterPro" id="IPR011333">
    <property type="entry name" value="SKP1/BTB/POZ_sf"/>
</dbReference>
<dbReference type="PANTHER" id="PTHR45972">
    <property type="entry name" value="BTB_2 DOMAIN-CONTAINING PROTEIN"/>
    <property type="match status" value="1"/>
</dbReference>
<dbReference type="PANTHER" id="PTHR45972:SF3">
    <property type="entry name" value="KELCH REPEAT AND BTB DOMAIN-CONTAINING PROTEIN 11"/>
    <property type="match status" value="1"/>
</dbReference>
<dbReference type="Pfam" id="PF00651">
    <property type="entry name" value="BTB"/>
    <property type="match status" value="1"/>
</dbReference>
<dbReference type="Pfam" id="PF01344">
    <property type="entry name" value="Kelch_1"/>
    <property type="match status" value="1"/>
</dbReference>
<dbReference type="Pfam" id="PF13964">
    <property type="entry name" value="Kelch_6"/>
    <property type="match status" value="1"/>
</dbReference>
<dbReference type="SMART" id="SM00225">
    <property type="entry name" value="BTB"/>
    <property type="match status" value="1"/>
</dbReference>
<dbReference type="SMART" id="SM00612">
    <property type="entry name" value="Kelch"/>
    <property type="match status" value="3"/>
</dbReference>
<dbReference type="SUPFAM" id="SSF117281">
    <property type="entry name" value="Kelch motif"/>
    <property type="match status" value="1"/>
</dbReference>
<dbReference type="SUPFAM" id="SSF54695">
    <property type="entry name" value="POZ domain"/>
    <property type="match status" value="1"/>
</dbReference>
<dbReference type="PROSITE" id="PS50097">
    <property type="entry name" value="BTB"/>
    <property type="match status" value="1"/>
</dbReference>
<name>KBTBB_MOUSE</name>
<comment type="sequence caution" evidence="4">
    <conflict type="erroneous initiation">
        <sequence resource="EMBL-CDS" id="BAC98007"/>
    </conflict>
</comment>
<feature type="chain" id="PRO_0000119091" description="Kelch repeat and BTB domain-containing protein 11">
    <location>
        <begin position="1"/>
        <end position="633"/>
    </location>
</feature>
<feature type="domain" description="BTB" evidence="2">
    <location>
        <begin position="146"/>
        <end position="206"/>
    </location>
</feature>
<feature type="repeat" description="Kelch 1">
    <location>
        <begin position="317"/>
        <end position="365"/>
    </location>
</feature>
<feature type="repeat" description="Kelch 2">
    <location>
        <begin position="366"/>
        <end position="418"/>
    </location>
</feature>
<feature type="repeat" description="Kelch 3">
    <location>
        <begin position="419"/>
        <end position="463"/>
    </location>
</feature>
<feature type="repeat" description="Kelch 4">
    <location>
        <begin position="465"/>
        <end position="506"/>
    </location>
</feature>
<feature type="region of interest" description="Disordered" evidence="3">
    <location>
        <begin position="1"/>
        <end position="118"/>
    </location>
</feature>
<feature type="compositionally biased region" description="Polar residues" evidence="3">
    <location>
        <begin position="35"/>
        <end position="60"/>
    </location>
</feature>
<feature type="compositionally biased region" description="Low complexity" evidence="3">
    <location>
        <begin position="61"/>
        <end position="73"/>
    </location>
</feature>
<feature type="modified residue" description="Phosphoserine" evidence="5 6">
    <location>
        <position position="70"/>
    </location>
</feature>
<feature type="modified residue" description="Phosphoserine" evidence="6">
    <location>
        <position position="73"/>
    </location>
</feature>
<feature type="modified residue" description="Phosphoserine" evidence="6">
    <location>
        <position position="92"/>
    </location>
</feature>
<feature type="modified residue" description="Phosphoserine" evidence="6">
    <location>
        <position position="95"/>
    </location>
</feature>
<feature type="modified residue" description="Phosphoserine" evidence="6">
    <location>
        <position position="107"/>
    </location>
</feature>
<feature type="modified residue" description="Phosphoserine" evidence="1">
    <location>
        <position position="113"/>
    </location>
</feature>
<feature type="sequence conflict" description="In Ref. 2; BAC37803." evidence="4" ref="2">
    <original>A</original>
    <variation>S</variation>
    <location>
        <position position="173"/>
    </location>
</feature>
<feature type="sequence conflict" description="In Ref. 1; BAC98007." evidence="4" ref="1">
    <original>L</original>
    <variation>V</variation>
    <location>
        <position position="369"/>
    </location>
</feature>
<sequence>MENSVAPFVLYSGTEPRTPGEDSLPLPAEEEGAASTAQTPCSLSASLCFSSGDDSPPQSRASAAEGSEASPPSLRSDLRVVETQWDVSSAASPESPEECARPEEPASPEDPPSRHEHARPVELESLDELGEPVPVPPGVGSVHGEPDLVIEVAGRRLRAHKAVLAARSDYFRARASRDVLRVQGVSFTALRLLLADAYSGRMAGVRPDNVAEVVAGARRLQLPGAAQRATEAMAPQLSLDNCYEVLSAGKRQRLTELRDAAYRFMSDHYLEVLREPAVFGRLSGAERDLLLRRRLCTGRACLLAAALGTTGERSGSRPQSPSGDAESRGDAAVYCYQAEAGEWRELTRLPEGAPARGCGLCVLFNYLFLAGGVAPAGPDGRARPSDQVYCYNPVTDSWSTVRPLRQARSQVQLLALDGHLYAVGGECLLSVERYDPRADRWTAVAPLPRGAFAVAHEAATCNGEIYVSGGSLFYRLLKYDPRRDEWQECPCSSSRERSADMVALDGFLYRFDLCGSRGEAQAAVGSGGGVSVFRYHCLAKQWSQCAVHLRPPGAPAGLQPFRCVALDGTIYCVSRAGTWRFVPSQDTEAGSDMGPGGSFEPEPLGSPLDVRGVLFPFVLNLPEKPDRGEQGAV</sequence>
<proteinExistence type="evidence at protein level"/>
<reference key="1">
    <citation type="journal article" date="2003" name="DNA Res.">
        <title>Prediction of the coding sequences of mouse homologues of KIAA gene: III. The complete nucleotide sequences of 500 mouse KIAA-homologous cDNAs identified by screening of terminal sequences of cDNA clones randomly sampled from size-fractionated libraries.</title>
        <authorList>
            <person name="Okazaki N."/>
            <person name="Kikuno R."/>
            <person name="Ohara R."/>
            <person name="Inamoto S."/>
            <person name="Koseki H."/>
            <person name="Hiraoka S."/>
            <person name="Saga Y."/>
            <person name="Nagase T."/>
            <person name="Ohara O."/>
            <person name="Koga H."/>
        </authorList>
    </citation>
    <scope>NUCLEOTIDE SEQUENCE [LARGE SCALE MRNA]</scope>
    <source>
        <tissue>Embryonic tail</tissue>
    </source>
</reference>
<reference key="2">
    <citation type="journal article" date="2005" name="Science">
        <title>The transcriptional landscape of the mammalian genome.</title>
        <authorList>
            <person name="Carninci P."/>
            <person name="Kasukawa T."/>
            <person name="Katayama S."/>
            <person name="Gough J."/>
            <person name="Frith M.C."/>
            <person name="Maeda N."/>
            <person name="Oyama R."/>
            <person name="Ravasi T."/>
            <person name="Lenhard B."/>
            <person name="Wells C."/>
            <person name="Kodzius R."/>
            <person name="Shimokawa K."/>
            <person name="Bajic V.B."/>
            <person name="Brenner S.E."/>
            <person name="Batalov S."/>
            <person name="Forrest A.R."/>
            <person name="Zavolan M."/>
            <person name="Davis M.J."/>
            <person name="Wilming L.G."/>
            <person name="Aidinis V."/>
            <person name="Allen J.E."/>
            <person name="Ambesi-Impiombato A."/>
            <person name="Apweiler R."/>
            <person name="Aturaliya R.N."/>
            <person name="Bailey T.L."/>
            <person name="Bansal M."/>
            <person name="Baxter L."/>
            <person name="Beisel K.W."/>
            <person name="Bersano T."/>
            <person name="Bono H."/>
            <person name="Chalk A.M."/>
            <person name="Chiu K.P."/>
            <person name="Choudhary V."/>
            <person name="Christoffels A."/>
            <person name="Clutterbuck D.R."/>
            <person name="Crowe M.L."/>
            <person name="Dalla E."/>
            <person name="Dalrymple B.P."/>
            <person name="de Bono B."/>
            <person name="Della Gatta G."/>
            <person name="di Bernardo D."/>
            <person name="Down T."/>
            <person name="Engstrom P."/>
            <person name="Fagiolini M."/>
            <person name="Faulkner G."/>
            <person name="Fletcher C.F."/>
            <person name="Fukushima T."/>
            <person name="Furuno M."/>
            <person name="Futaki S."/>
            <person name="Gariboldi M."/>
            <person name="Georgii-Hemming P."/>
            <person name="Gingeras T.R."/>
            <person name="Gojobori T."/>
            <person name="Green R.E."/>
            <person name="Gustincich S."/>
            <person name="Harbers M."/>
            <person name="Hayashi Y."/>
            <person name="Hensch T.K."/>
            <person name="Hirokawa N."/>
            <person name="Hill D."/>
            <person name="Huminiecki L."/>
            <person name="Iacono M."/>
            <person name="Ikeo K."/>
            <person name="Iwama A."/>
            <person name="Ishikawa T."/>
            <person name="Jakt M."/>
            <person name="Kanapin A."/>
            <person name="Katoh M."/>
            <person name="Kawasawa Y."/>
            <person name="Kelso J."/>
            <person name="Kitamura H."/>
            <person name="Kitano H."/>
            <person name="Kollias G."/>
            <person name="Krishnan S.P."/>
            <person name="Kruger A."/>
            <person name="Kummerfeld S.K."/>
            <person name="Kurochkin I.V."/>
            <person name="Lareau L.F."/>
            <person name="Lazarevic D."/>
            <person name="Lipovich L."/>
            <person name="Liu J."/>
            <person name="Liuni S."/>
            <person name="McWilliam S."/>
            <person name="Madan Babu M."/>
            <person name="Madera M."/>
            <person name="Marchionni L."/>
            <person name="Matsuda H."/>
            <person name="Matsuzawa S."/>
            <person name="Miki H."/>
            <person name="Mignone F."/>
            <person name="Miyake S."/>
            <person name="Morris K."/>
            <person name="Mottagui-Tabar S."/>
            <person name="Mulder N."/>
            <person name="Nakano N."/>
            <person name="Nakauchi H."/>
            <person name="Ng P."/>
            <person name="Nilsson R."/>
            <person name="Nishiguchi S."/>
            <person name="Nishikawa S."/>
            <person name="Nori F."/>
            <person name="Ohara O."/>
            <person name="Okazaki Y."/>
            <person name="Orlando V."/>
            <person name="Pang K.C."/>
            <person name="Pavan W.J."/>
            <person name="Pavesi G."/>
            <person name="Pesole G."/>
            <person name="Petrovsky N."/>
            <person name="Piazza S."/>
            <person name="Reed J."/>
            <person name="Reid J.F."/>
            <person name="Ring B.Z."/>
            <person name="Ringwald M."/>
            <person name="Rost B."/>
            <person name="Ruan Y."/>
            <person name="Salzberg S.L."/>
            <person name="Sandelin A."/>
            <person name="Schneider C."/>
            <person name="Schoenbach C."/>
            <person name="Sekiguchi K."/>
            <person name="Semple C.A."/>
            <person name="Seno S."/>
            <person name="Sessa L."/>
            <person name="Sheng Y."/>
            <person name="Shibata Y."/>
            <person name="Shimada H."/>
            <person name="Shimada K."/>
            <person name="Silva D."/>
            <person name="Sinclair B."/>
            <person name="Sperling S."/>
            <person name="Stupka E."/>
            <person name="Sugiura K."/>
            <person name="Sultana R."/>
            <person name="Takenaka Y."/>
            <person name="Taki K."/>
            <person name="Tammoja K."/>
            <person name="Tan S.L."/>
            <person name="Tang S."/>
            <person name="Taylor M.S."/>
            <person name="Tegner J."/>
            <person name="Teichmann S.A."/>
            <person name="Ueda H.R."/>
            <person name="van Nimwegen E."/>
            <person name="Verardo R."/>
            <person name="Wei C.L."/>
            <person name="Yagi K."/>
            <person name="Yamanishi H."/>
            <person name="Zabarovsky E."/>
            <person name="Zhu S."/>
            <person name="Zimmer A."/>
            <person name="Hide W."/>
            <person name="Bult C."/>
            <person name="Grimmond S.M."/>
            <person name="Teasdale R.D."/>
            <person name="Liu E.T."/>
            <person name="Brusic V."/>
            <person name="Quackenbush J."/>
            <person name="Wahlestedt C."/>
            <person name="Mattick J.S."/>
            <person name="Hume D.A."/>
            <person name="Kai C."/>
            <person name="Sasaki D."/>
            <person name="Tomaru Y."/>
            <person name="Fukuda S."/>
            <person name="Kanamori-Katayama M."/>
            <person name="Suzuki M."/>
            <person name="Aoki J."/>
            <person name="Arakawa T."/>
            <person name="Iida J."/>
            <person name="Imamura K."/>
            <person name="Itoh M."/>
            <person name="Kato T."/>
            <person name="Kawaji H."/>
            <person name="Kawagashira N."/>
            <person name="Kawashima T."/>
            <person name="Kojima M."/>
            <person name="Kondo S."/>
            <person name="Konno H."/>
            <person name="Nakano K."/>
            <person name="Ninomiya N."/>
            <person name="Nishio T."/>
            <person name="Okada M."/>
            <person name="Plessy C."/>
            <person name="Shibata K."/>
            <person name="Shiraki T."/>
            <person name="Suzuki S."/>
            <person name="Tagami M."/>
            <person name="Waki K."/>
            <person name="Watahiki A."/>
            <person name="Okamura-Oho Y."/>
            <person name="Suzuki H."/>
            <person name="Kawai J."/>
            <person name="Hayashizaki Y."/>
        </authorList>
    </citation>
    <scope>NUCLEOTIDE SEQUENCE [LARGE SCALE MRNA]</scope>
    <source>
        <strain>C57BL/6J</strain>
        <tissue>Aorta</tissue>
        <tissue>Vein</tissue>
    </source>
</reference>
<reference key="3">
    <citation type="journal article" date="2004" name="Genome Res.">
        <title>The status, quality, and expansion of the NIH full-length cDNA project: the Mammalian Gene Collection (MGC).</title>
        <authorList>
            <consortium name="The MGC Project Team"/>
        </authorList>
    </citation>
    <scope>NUCLEOTIDE SEQUENCE [LARGE SCALE MRNA]</scope>
    <source>
        <strain>C57BL/6J</strain>
        <tissue>Brain</tissue>
    </source>
</reference>
<reference key="4">
    <citation type="journal article" date="2006" name="Mol. Cell. Proteomics">
        <title>Comprehensive identification of phosphorylation sites in postsynaptic density preparations.</title>
        <authorList>
            <person name="Trinidad J.C."/>
            <person name="Specht C.G."/>
            <person name="Thalhammer A."/>
            <person name="Schoepfer R."/>
            <person name="Burlingame A.L."/>
        </authorList>
    </citation>
    <scope>IDENTIFICATION BY MASS SPECTROMETRY [LARGE SCALE ANALYSIS]</scope>
    <source>
        <tissue>Brain</tissue>
    </source>
</reference>
<reference key="5">
    <citation type="journal article" date="2007" name="Mol. Cell. Proteomics">
        <title>Qualitative and quantitative analyses of protein phosphorylation in naive and stimulated mouse synaptosomal preparations.</title>
        <authorList>
            <person name="Munton R.P."/>
            <person name="Tweedie-Cullen R."/>
            <person name="Livingstone-Zatchej M."/>
            <person name="Weinandy F."/>
            <person name="Waidelich M."/>
            <person name="Longo D."/>
            <person name="Gehrig P."/>
            <person name="Potthast F."/>
            <person name="Rutishauser D."/>
            <person name="Gerrits B."/>
            <person name="Panse C."/>
            <person name="Schlapbach R."/>
            <person name="Mansuy I.M."/>
        </authorList>
    </citation>
    <scope>IDENTIFICATION BY MASS SPECTROMETRY [LARGE SCALE ANALYSIS]</scope>
    <source>
        <tissue>Brain cortex</tissue>
    </source>
</reference>
<reference key="6">
    <citation type="journal article" date="2009" name="Immunity">
        <title>The phagosomal proteome in interferon-gamma-activated macrophages.</title>
        <authorList>
            <person name="Trost M."/>
            <person name="English L."/>
            <person name="Lemieux S."/>
            <person name="Courcelles M."/>
            <person name="Desjardins M."/>
            <person name="Thibault P."/>
        </authorList>
    </citation>
    <scope>PHOSPHORYLATION [LARGE SCALE ANALYSIS] AT SER-70</scope>
    <scope>IDENTIFICATION BY MASS SPECTROMETRY [LARGE SCALE ANALYSIS]</scope>
</reference>
<reference key="7">
    <citation type="journal article" date="2010" name="Cell">
        <title>A tissue-specific atlas of mouse protein phosphorylation and expression.</title>
        <authorList>
            <person name="Huttlin E.L."/>
            <person name="Jedrychowski M.P."/>
            <person name="Elias J.E."/>
            <person name="Goswami T."/>
            <person name="Rad R."/>
            <person name="Beausoleil S.A."/>
            <person name="Villen J."/>
            <person name="Haas W."/>
            <person name="Sowa M.E."/>
            <person name="Gygi S.P."/>
        </authorList>
    </citation>
    <scope>PHOSPHORYLATION [LARGE SCALE ANALYSIS] AT SER-70; SER-73; SER-92; SER-95 AND SER-107</scope>
    <scope>IDENTIFICATION BY MASS SPECTROMETRY [LARGE SCALE ANALYSIS]</scope>
    <source>
        <tissue>Brain</tissue>
        <tissue>Brown adipose tissue</tissue>
        <tissue>Kidney</tissue>
        <tissue>Lung</tissue>
        <tissue>Spleen</tissue>
        <tissue>Testis</tissue>
    </source>
</reference>
<gene>
    <name type="primary">Kbtbd11</name>
    <name type="synonym">Kiaa0711</name>
</gene>
<organism>
    <name type="scientific">Mus musculus</name>
    <name type="common">Mouse</name>
    <dbReference type="NCBI Taxonomy" id="10090"/>
    <lineage>
        <taxon>Eukaryota</taxon>
        <taxon>Metazoa</taxon>
        <taxon>Chordata</taxon>
        <taxon>Craniata</taxon>
        <taxon>Vertebrata</taxon>
        <taxon>Euteleostomi</taxon>
        <taxon>Mammalia</taxon>
        <taxon>Eutheria</taxon>
        <taxon>Euarchontoglires</taxon>
        <taxon>Glires</taxon>
        <taxon>Rodentia</taxon>
        <taxon>Myomorpha</taxon>
        <taxon>Muroidea</taxon>
        <taxon>Muridae</taxon>
        <taxon>Murinae</taxon>
        <taxon>Mus</taxon>
        <taxon>Mus</taxon>
    </lineage>
</organism>
<accession>Q8BNW9</accession>
<accession>A3KME3</accession>